<dbReference type="EC" id="1.1.1.85" evidence="1 2"/>
<dbReference type="EMBL" id="D17631">
    <property type="protein sequence ID" value="BAA04537.1"/>
    <property type="molecule type" value="Genomic_DNA"/>
</dbReference>
<dbReference type="EMBL" id="U00096">
    <property type="protein sequence ID" value="AAC73184.2"/>
    <property type="molecule type" value="Genomic_DNA"/>
</dbReference>
<dbReference type="EMBL" id="AP009048">
    <property type="protein sequence ID" value="BAB96642.1"/>
    <property type="molecule type" value="Genomic_DNA"/>
</dbReference>
<dbReference type="PIR" id="A64729">
    <property type="entry name" value="A64729"/>
</dbReference>
<dbReference type="RefSeq" id="NP_414615.4">
    <property type="nucleotide sequence ID" value="NC_000913.3"/>
</dbReference>
<dbReference type="RefSeq" id="WP_000042353.1">
    <property type="nucleotide sequence ID" value="NZ_STEB01000010.1"/>
</dbReference>
<dbReference type="PDB" id="1CM7">
    <property type="method" value="X-ray"/>
    <property type="resolution" value="2.06 A"/>
    <property type="chains" value="A/B=1-363"/>
</dbReference>
<dbReference type="PDBsum" id="1CM7"/>
<dbReference type="SMR" id="P30125"/>
<dbReference type="BioGRID" id="4259727">
    <property type="interactions" value="13"/>
</dbReference>
<dbReference type="BioGRID" id="849199">
    <property type="interactions" value="2"/>
</dbReference>
<dbReference type="FunCoup" id="P30125">
    <property type="interactions" value="679"/>
</dbReference>
<dbReference type="IntAct" id="P30125">
    <property type="interactions" value="2"/>
</dbReference>
<dbReference type="STRING" id="511145.b0073"/>
<dbReference type="jPOST" id="P30125"/>
<dbReference type="PaxDb" id="511145-b0073"/>
<dbReference type="EnsemblBacteria" id="AAC73184">
    <property type="protein sequence ID" value="AAC73184"/>
    <property type="gene ID" value="b0073"/>
</dbReference>
<dbReference type="GeneID" id="75202110"/>
<dbReference type="GeneID" id="944798"/>
<dbReference type="KEGG" id="ecj:JW5807"/>
<dbReference type="KEGG" id="eco:b0073"/>
<dbReference type="PATRIC" id="fig|1411691.4.peg.2208"/>
<dbReference type="EchoBASE" id="EB1537"/>
<dbReference type="eggNOG" id="COG0473">
    <property type="taxonomic scope" value="Bacteria"/>
</dbReference>
<dbReference type="HOGENOM" id="CLU_031953_0_3_6"/>
<dbReference type="InParanoid" id="P30125"/>
<dbReference type="OMA" id="EYDLGAR"/>
<dbReference type="OrthoDB" id="9767905at2"/>
<dbReference type="PhylomeDB" id="P30125"/>
<dbReference type="BioCyc" id="EcoCyc:3-ISOPROPYLMALDEHYDROG-MONOMER"/>
<dbReference type="BioCyc" id="MetaCyc:3-ISOPROPYLMALDEHYDROG-MONOMER"/>
<dbReference type="BRENDA" id="1.1.1.85">
    <property type="organism ID" value="2026"/>
</dbReference>
<dbReference type="SABIO-RK" id="P30125"/>
<dbReference type="UniPathway" id="UPA00048">
    <property type="reaction ID" value="UER00072"/>
</dbReference>
<dbReference type="EvolutionaryTrace" id="P30125"/>
<dbReference type="PRO" id="PR:P30125"/>
<dbReference type="Proteomes" id="UP000000625">
    <property type="component" value="Chromosome"/>
</dbReference>
<dbReference type="GO" id="GO:0005829">
    <property type="term" value="C:cytosol"/>
    <property type="evidence" value="ECO:0000314"/>
    <property type="project" value="EcoCyc"/>
</dbReference>
<dbReference type="GO" id="GO:0003862">
    <property type="term" value="F:3-isopropylmalate dehydrogenase activity"/>
    <property type="evidence" value="ECO:0000314"/>
    <property type="project" value="EcoCyc"/>
</dbReference>
<dbReference type="GO" id="GO:0000287">
    <property type="term" value="F:magnesium ion binding"/>
    <property type="evidence" value="ECO:0000314"/>
    <property type="project" value="EcoCyc"/>
</dbReference>
<dbReference type="GO" id="GO:0030145">
    <property type="term" value="F:manganese ion binding"/>
    <property type="evidence" value="ECO:0000314"/>
    <property type="project" value="EcoCyc"/>
</dbReference>
<dbReference type="GO" id="GO:0046872">
    <property type="term" value="F:metal ion binding"/>
    <property type="evidence" value="ECO:0000314"/>
    <property type="project" value="EcoCyc"/>
</dbReference>
<dbReference type="GO" id="GO:0051287">
    <property type="term" value="F:NAD binding"/>
    <property type="evidence" value="ECO:0007669"/>
    <property type="project" value="InterPro"/>
</dbReference>
<dbReference type="GO" id="GO:0034198">
    <property type="term" value="P:cellular response to amino acid starvation"/>
    <property type="evidence" value="ECO:0000315"/>
    <property type="project" value="EcoliWiki"/>
</dbReference>
<dbReference type="GO" id="GO:0009098">
    <property type="term" value="P:L-leucine biosynthetic process"/>
    <property type="evidence" value="ECO:0000314"/>
    <property type="project" value="EcoCyc"/>
</dbReference>
<dbReference type="FunFam" id="3.40.718.10:FF:000004">
    <property type="entry name" value="3-isopropylmalate dehydrogenase"/>
    <property type="match status" value="1"/>
</dbReference>
<dbReference type="Gene3D" id="3.40.718.10">
    <property type="entry name" value="Isopropylmalate Dehydrogenase"/>
    <property type="match status" value="1"/>
</dbReference>
<dbReference type="HAMAP" id="MF_01033">
    <property type="entry name" value="LeuB_type1"/>
    <property type="match status" value="1"/>
</dbReference>
<dbReference type="InterPro" id="IPR019818">
    <property type="entry name" value="IsoCit/isopropylmalate_DH_CS"/>
</dbReference>
<dbReference type="InterPro" id="IPR024084">
    <property type="entry name" value="IsoPropMal-DH-like_dom"/>
</dbReference>
<dbReference type="InterPro" id="IPR004429">
    <property type="entry name" value="Isopropylmalate_DH"/>
</dbReference>
<dbReference type="NCBIfam" id="TIGR00169">
    <property type="entry name" value="leuB"/>
    <property type="match status" value="1"/>
</dbReference>
<dbReference type="PANTHER" id="PTHR42979">
    <property type="entry name" value="3-ISOPROPYLMALATE DEHYDROGENASE"/>
    <property type="match status" value="1"/>
</dbReference>
<dbReference type="PANTHER" id="PTHR42979:SF1">
    <property type="entry name" value="3-ISOPROPYLMALATE DEHYDROGENASE"/>
    <property type="match status" value="1"/>
</dbReference>
<dbReference type="Pfam" id="PF00180">
    <property type="entry name" value="Iso_dh"/>
    <property type="match status" value="1"/>
</dbReference>
<dbReference type="SMART" id="SM01329">
    <property type="entry name" value="Iso_dh"/>
    <property type="match status" value="1"/>
</dbReference>
<dbReference type="SUPFAM" id="SSF53659">
    <property type="entry name" value="Isocitrate/Isopropylmalate dehydrogenase-like"/>
    <property type="match status" value="1"/>
</dbReference>
<dbReference type="PROSITE" id="PS00470">
    <property type="entry name" value="IDH_IMDH"/>
    <property type="match status" value="1"/>
</dbReference>
<comment type="function">
    <text evidence="1 2">Catalyzes the oxidation of 3-carboxy-2-hydroxy-4-methylpentanoate (3-isopropylmalate) to 3-carboxy-4-methyl-2-oxopentanoate. The product decarboxylates to 4-methyl-2 oxopentanoate.</text>
</comment>
<comment type="catalytic activity">
    <reaction evidence="1 2">
        <text>(2R,3S)-3-isopropylmalate + NAD(+) = 4-methyl-2-oxopentanoate + CO2 + NADH</text>
        <dbReference type="Rhea" id="RHEA:32271"/>
        <dbReference type="ChEBI" id="CHEBI:16526"/>
        <dbReference type="ChEBI" id="CHEBI:17865"/>
        <dbReference type="ChEBI" id="CHEBI:35121"/>
        <dbReference type="ChEBI" id="CHEBI:57540"/>
        <dbReference type="ChEBI" id="CHEBI:57945"/>
        <dbReference type="EC" id="1.1.1.85"/>
    </reaction>
</comment>
<comment type="cofactor">
    <cofactor evidence="1 2">
        <name>Mg(2+)</name>
        <dbReference type="ChEBI" id="CHEBI:18420"/>
    </cofactor>
    <cofactor evidence="1 2">
        <name>Mn(2+)</name>
        <dbReference type="ChEBI" id="CHEBI:29035"/>
    </cofactor>
    <text evidence="1">Binds 1 Mg(2+) or Mn(2+) ion per subunit.</text>
</comment>
<comment type="activity regulation">
    <text evidence="2">Requires K(+) ions for optimum activity.</text>
</comment>
<comment type="biophysicochemical properties">
    <kinetics>
        <KM evidence="2">105 uM for 3-isopropylmalate (at 40 degrees Celsius)</KM>
        <KM evidence="2">321 uM for NAD (at 40 degrees Celsius)</KM>
        <text evidence="2">kcat is 69 sec(-1).</text>
    </kinetics>
    <phDependence>
        <text evidence="2">Optimum pH is 7.6.</text>
    </phDependence>
    <temperatureDependence>
        <text evidence="2">Optimum temperature is 70 degrees Celsius.</text>
    </temperatureDependence>
</comment>
<comment type="pathway">
    <text evidence="1 7">Amino-acid biosynthesis; L-leucine biosynthesis; L-leucine from 3-methyl-2-oxobutanoate: step 3/4.</text>
</comment>
<comment type="subunit">
    <text evidence="1 3">Homodimer.</text>
</comment>
<comment type="subcellular location">
    <subcellularLocation>
        <location evidence="1">Cytoplasm</location>
    </subcellularLocation>
</comment>
<comment type="similarity">
    <text evidence="1 6">Belongs to the isocitrate and isopropylmalate dehydrogenases family. LeuB type 1 subfamily.</text>
</comment>
<reference key="1">
    <citation type="journal article" date="1994" name="Eur. J. Biochem.">
        <title>Hydrophobic interaction at the subunit interface contributes to the thermostability of 3-isopropylmalate dehydrogenase from an extreme thermophile, Thermus thermophilus.</title>
        <authorList>
            <person name="Kirino H."/>
            <person name="Aoki M."/>
            <person name="Aoshima M."/>
            <person name="Hayashi Y."/>
            <person name="Ohba M."/>
            <person name="Yamagishi A."/>
            <person name="Wakagi T."/>
            <person name="Oshima T."/>
        </authorList>
    </citation>
    <scope>NUCLEOTIDE SEQUENCE [GENOMIC DNA]</scope>
    <source>
        <strain>K12</strain>
    </source>
</reference>
<reference key="2">
    <citation type="journal article" date="1992" name="Nucleic Acids Res.">
        <title>Systematic sequencing of the Escherichia coli genome: analysis of the 0-2.4 min region.</title>
        <authorList>
            <person name="Yura T."/>
            <person name="Mori H."/>
            <person name="Nagai H."/>
            <person name="Nagata T."/>
            <person name="Ishihama A."/>
            <person name="Fujita N."/>
            <person name="Isono K."/>
            <person name="Mizobuchi K."/>
            <person name="Nakata A."/>
        </authorList>
    </citation>
    <scope>NUCLEOTIDE SEQUENCE [LARGE SCALE GENOMIC DNA]</scope>
    <source>
        <strain>K12</strain>
    </source>
</reference>
<reference key="3">
    <citation type="journal article" date="1997" name="Science">
        <title>The complete genome sequence of Escherichia coli K-12.</title>
        <authorList>
            <person name="Blattner F.R."/>
            <person name="Plunkett G. III"/>
            <person name="Bloch C.A."/>
            <person name="Perna N.T."/>
            <person name="Burland V."/>
            <person name="Riley M."/>
            <person name="Collado-Vides J."/>
            <person name="Glasner J.D."/>
            <person name="Rode C.K."/>
            <person name="Mayhew G.F."/>
            <person name="Gregor J."/>
            <person name="Davis N.W."/>
            <person name="Kirkpatrick H.A."/>
            <person name="Goeden M.A."/>
            <person name="Rose D.J."/>
            <person name="Mau B."/>
            <person name="Shao Y."/>
        </authorList>
    </citation>
    <scope>NUCLEOTIDE SEQUENCE [LARGE SCALE GENOMIC DNA]</scope>
    <source>
        <strain>K12 / MG1655 / ATCC 47076</strain>
    </source>
</reference>
<reference key="4">
    <citation type="journal article" date="2006" name="Mol. Syst. Biol.">
        <title>Highly accurate genome sequences of Escherichia coli K-12 strains MG1655 and W3110.</title>
        <authorList>
            <person name="Hayashi K."/>
            <person name="Morooka N."/>
            <person name="Yamamoto Y."/>
            <person name="Fujita K."/>
            <person name="Isono K."/>
            <person name="Choi S."/>
            <person name="Ohtsubo E."/>
            <person name="Baba T."/>
            <person name="Wanner B.L."/>
            <person name="Mori H."/>
            <person name="Horiuchi T."/>
        </authorList>
    </citation>
    <scope>NUCLEOTIDE SEQUENCE [LARGE SCALE GENOMIC DNA]</scope>
    <source>
        <strain>K12 / W3110 / ATCC 27325 / DSM 5911</strain>
    </source>
</reference>
<reference key="5">
    <citation type="journal article" date="1997" name="Electrophoresis">
        <title>Comparing the predicted and observed properties of proteins encoded in the genome of Escherichia coli K-12.</title>
        <authorList>
            <person name="Link A.J."/>
            <person name="Robison K."/>
            <person name="Church G.M."/>
        </authorList>
    </citation>
    <scope>PROTEIN SEQUENCE OF 2-13</scope>
    <source>
        <strain>K12 / EMG2</strain>
    </source>
</reference>
<reference key="6">
    <citation type="journal article" date="1997" name="Biochim. Biophys. Acta">
        <title>Purification, catalytic properties and thermostability of 3-isopropylmalate dehydrogenase from Escherichia coli.</title>
        <authorList>
            <person name="Wallon G."/>
            <person name="Yamamoto K."/>
            <person name="Kirino H."/>
            <person name="Yamagishi A."/>
            <person name="Lovett S.T."/>
            <person name="Petsko G.A."/>
            <person name="Oshima T."/>
        </authorList>
    </citation>
    <scope>PROTEIN SEQUENCE OF 2-11</scope>
    <scope>FUNCTION</scope>
    <scope>CATALYTIC ACTIVITY</scope>
    <scope>COFACTOR</scope>
    <scope>ACTIVITY REGULATION</scope>
    <scope>BIOPHYSICOCHEMICAL PROPERTIES</scope>
    <scope>PATHWAY</scope>
</reference>
<reference key="7">
    <citation type="journal article" date="1996" name="Protein Eng.">
        <title>Relationship between thermal stability and 3-D structure in a homology model of 3-isopropylmalate dehydrogenase from Escherichia coli.</title>
        <authorList>
            <person name="Magyar C."/>
            <person name="Szilagyi A."/>
            <person name="Zavodszy P."/>
        </authorList>
    </citation>
    <scope>3D-STRUCTURE MODELING</scope>
</reference>
<reference key="8">
    <citation type="journal article" date="1997" name="J. Mol. Biol.">
        <title>Crystal structures of Escherichia coli and Salmonella typhimurium 3-isopropylmalate dehydrogenase and comparison with their thermophilic counterpart from Thermus thermophilus.</title>
        <authorList>
            <person name="Wallon G."/>
            <person name="Kryger G."/>
            <person name="Lovett S.T."/>
            <person name="Oshima T."/>
            <person name="Ringe D."/>
            <person name="Petsko G.A."/>
        </authorList>
    </citation>
    <scope>X-RAY CRYSTALLOGRAPHY (2.06 ANGSTROMS)</scope>
    <scope>SUBUNIT</scope>
</reference>
<name>LEU3_ECOLI</name>
<gene>
    <name evidence="1" type="primary">leuB</name>
    <name type="ordered locus">b0073</name>
    <name type="ordered locus">JW5807</name>
</gene>
<accession>P30125</accession>
<accession>P78043</accession>
<proteinExistence type="evidence at protein level"/>
<evidence type="ECO:0000255" key="1">
    <source>
        <dbReference type="HAMAP-Rule" id="MF_01033"/>
    </source>
</evidence>
<evidence type="ECO:0000269" key="2">
    <source>
    </source>
</evidence>
<evidence type="ECO:0000269" key="3">
    <source>
    </source>
</evidence>
<evidence type="ECO:0000269" key="4">
    <source>
    </source>
</evidence>
<evidence type="ECO:0000303" key="5">
    <source>
    </source>
</evidence>
<evidence type="ECO:0000305" key="6"/>
<evidence type="ECO:0000305" key="7">
    <source>
    </source>
</evidence>
<evidence type="ECO:0007829" key="8">
    <source>
        <dbReference type="PDB" id="1CM7"/>
    </source>
</evidence>
<organism>
    <name type="scientific">Escherichia coli (strain K12)</name>
    <dbReference type="NCBI Taxonomy" id="83333"/>
    <lineage>
        <taxon>Bacteria</taxon>
        <taxon>Pseudomonadati</taxon>
        <taxon>Pseudomonadota</taxon>
        <taxon>Gammaproteobacteria</taxon>
        <taxon>Enterobacterales</taxon>
        <taxon>Enterobacteriaceae</taxon>
        <taxon>Escherichia</taxon>
    </lineage>
</organism>
<sequence length="363" mass="39517">MSKNYHIAVLPGDGIGPEVMTQALKVLDAVRNRFAMRITTSHYDVGGAAIDNHGQPLPPATVEGCEQADAVLFGSVGGPKWEHLPPDQQPERGALLPLRKHFKLFSNLRPAKLYQGLEAFCPLRADIAANGFDILCVRELTGGIYFGQPKGREGSGQYEKAFDTEVYHRFEIERIARIAFESARKRRHKVTSIDKANVLQSSILWREIVNEIATEYPDVELAHMYIDNATMQLIKDPSQFDVLLCSNLFGDILSDECAMITGSMGMLPSASLNEQGFGLYEPAGGSAPDIAGKNIANPIAQILSLALLLRYSLDADDAACAIERAINRALEEGIRTGDLARGAAAVSTDEMGDIIARYVAEGV</sequence>
<feature type="initiator methionine" description="Removed" evidence="2 4">
    <location>
        <position position="1"/>
    </location>
</feature>
<feature type="chain" id="PRO_0000083691" description="3-isopropylmalate dehydrogenase">
    <location>
        <begin position="2"/>
        <end position="363"/>
    </location>
</feature>
<feature type="binding site" evidence="1">
    <location>
        <begin position="78"/>
        <end position="91"/>
    </location>
    <ligand>
        <name>NAD(+)</name>
        <dbReference type="ChEBI" id="CHEBI:57540"/>
    </ligand>
</feature>
<feature type="binding site" evidence="1">
    <location>
        <position position="99"/>
    </location>
    <ligand>
        <name>substrate</name>
    </ligand>
</feature>
<feature type="binding site" evidence="1">
    <location>
        <position position="109"/>
    </location>
    <ligand>
        <name>substrate</name>
    </ligand>
</feature>
<feature type="binding site" evidence="1">
    <location>
        <position position="138"/>
    </location>
    <ligand>
        <name>substrate</name>
    </ligand>
</feature>
<feature type="binding site" evidence="1">
    <location>
        <position position="227"/>
    </location>
    <ligand>
        <name>Mg(2+)</name>
        <dbReference type="ChEBI" id="CHEBI:18420"/>
    </ligand>
</feature>
<feature type="binding site" evidence="1">
    <location>
        <position position="227"/>
    </location>
    <ligand>
        <name>substrate</name>
    </ligand>
</feature>
<feature type="binding site" evidence="1">
    <location>
        <position position="251"/>
    </location>
    <ligand>
        <name>Mg(2+)</name>
        <dbReference type="ChEBI" id="CHEBI:18420"/>
    </ligand>
</feature>
<feature type="binding site" evidence="1">
    <location>
        <position position="255"/>
    </location>
    <ligand>
        <name>Mg(2+)</name>
        <dbReference type="ChEBI" id="CHEBI:18420"/>
    </ligand>
</feature>
<feature type="binding site" evidence="1">
    <location>
        <begin position="285"/>
        <end position="297"/>
    </location>
    <ligand>
        <name>NAD(+)</name>
        <dbReference type="ChEBI" id="CHEBI:57540"/>
    </ligand>
</feature>
<feature type="site" description="Important for catalysis" evidence="1">
    <location>
        <position position="145"/>
    </location>
</feature>
<feature type="site" description="Important for catalysis" evidence="1">
    <location>
        <position position="195"/>
    </location>
</feature>
<feature type="sequence conflict" description="In Ref. 6; AA sequence." evidence="6" ref="6">
    <original>S</original>
    <variation>D</variation>
    <location>
        <position position="2"/>
    </location>
</feature>
<feature type="strand" evidence="8">
    <location>
        <begin position="3"/>
        <end position="13"/>
    </location>
</feature>
<feature type="helix" evidence="8">
    <location>
        <begin position="16"/>
        <end position="34"/>
    </location>
</feature>
<feature type="strand" evidence="8">
    <location>
        <begin position="37"/>
        <end position="42"/>
    </location>
</feature>
<feature type="helix" evidence="8">
    <location>
        <begin position="47"/>
        <end position="53"/>
    </location>
</feature>
<feature type="strand" evidence="8">
    <location>
        <begin position="54"/>
        <end position="57"/>
    </location>
</feature>
<feature type="helix" evidence="8">
    <location>
        <begin position="59"/>
        <end position="66"/>
    </location>
</feature>
<feature type="strand" evidence="8">
    <location>
        <begin position="68"/>
        <end position="75"/>
    </location>
</feature>
<feature type="strand" evidence="8">
    <location>
        <begin position="86"/>
        <end position="89"/>
    </location>
</feature>
<feature type="helix" evidence="8">
    <location>
        <begin position="90"/>
        <end position="101"/>
    </location>
</feature>
<feature type="strand" evidence="8">
    <location>
        <begin position="106"/>
        <end position="112"/>
    </location>
</feature>
<feature type="turn" evidence="8">
    <location>
        <begin position="118"/>
        <end position="120"/>
    </location>
</feature>
<feature type="strand" evidence="8">
    <location>
        <begin position="121"/>
        <end position="123"/>
    </location>
</feature>
<feature type="helix" evidence="8">
    <location>
        <begin position="125"/>
        <end position="128"/>
    </location>
</feature>
<feature type="strand" evidence="8">
    <location>
        <begin position="133"/>
        <end position="139"/>
    </location>
</feature>
<feature type="helix" evidence="8">
    <location>
        <begin position="143"/>
        <end position="145"/>
    </location>
</feature>
<feature type="strand" evidence="8">
    <location>
        <begin position="148"/>
        <end position="153"/>
    </location>
</feature>
<feature type="helix" evidence="8">
    <location>
        <begin position="156"/>
        <end position="158"/>
    </location>
</feature>
<feature type="strand" evidence="8">
    <location>
        <begin position="160"/>
        <end position="168"/>
    </location>
</feature>
<feature type="helix" evidence="8">
    <location>
        <begin position="169"/>
        <end position="184"/>
    </location>
</feature>
<feature type="turn" evidence="8">
    <location>
        <begin position="185"/>
        <end position="187"/>
    </location>
</feature>
<feature type="strand" evidence="8">
    <location>
        <begin position="188"/>
        <end position="194"/>
    </location>
</feature>
<feature type="turn" evidence="8">
    <location>
        <begin position="196"/>
        <end position="198"/>
    </location>
</feature>
<feature type="helix" evidence="8">
    <location>
        <begin position="200"/>
        <end position="212"/>
    </location>
</feature>
<feature type="helix" evidence="8">
    <location>
        <begin position="213"/>
        <end position="215"/>
    </location>
</feature>
<feature type="strand" evidence="8">
    <location>
        <begin position="219"/>
        <end position="225"/>
    </location>
</feature>
<feature type="helix" evidence="8">
    <location>
        <begin position="226"/>
        <end position="235"/>
    </location>
</feature>
<feature type="helix" evidence="8">
    <location>
        <begin position="237"/>
        <end position="239"/>
    </location>
</feature>
<feature type="strand" evidence="8">
    <location>
        <begin position="241"/>
        <end position="245"/>
    </location>
</feature>
<feature type="helix" evidence="8">
    <location>
        <begin position="247"/>
        <end position="261"/>
    </location>
</feature>
<feature type="strand" evidence="8">
    <location>
        <begin position="268"/>
        <end position="272"/>
    </location>
</feature>
<feature type="strand" evidence="8">
    <location>
        <begin position="278"/>
        <end position="284"/>
    </location>
</feature>
<feature type="helix" evidence="8">
    <location>
        <begin position="288"/>
        <end position="290"/>
    </location>
</feature>
<feature type="helix" evidence="8">
    <location>
        <begin position="299"/>
        <end position="311"/>
    </location>
</feature>
<feature type="helix" evidence="8">
    <location>
        <begin position="316"/>
        <end position="331"/>
    </location>
</feature>
<feature type="strand" evidence="8">
    <location>
        <begin position="336"/>
        <end position="338"/>
    </location>
</feature>
<feature type="helix" evidence="8">
    <location>
        <begin position="348"/>
        <end position="359"/>
    </location>
</feature>
<keyword id="KW-0002">3D-structure</keyword>
<keyword id="KW-0028">Amino-acid biosynthesis</keyword>
<keyword id="KW-0100">Branched-chain amino acid biosynthesis</keyword>
<keyword id="KW-0963">Cytoplasm</keyword>
<keyword id="KW-0903">Direct protein sequencing</keyword>
<keyword id="KW-0432">Leucine biosynthesis</keyword>
<keyword id="KW-0460">Magnesium</keyword>
<keyword id="KW-0464">Manganese</keyword>
<keyword id="KW-0479">Metal-binding</keyword>
<keyword id="KW-0520">NAD</keyword>
<keyword id="KW-0560">Oxidoreductase</keyword>
<keyword id="KW-1185">Reference proteome</keyword>
<protein>
    <recommendedName>
        <fullName evidence="1 5">3-isopropylmalate dehydrogenase</fullName>
        <ecNumber evidence="1 2">1.1.1.85</ecNumber>
    </recommendedName>
    <alternativeName>
        <fullName evidence="1">3-IPM-DH</fullName>
    </alternativeName>
    <alternativeName>
        <fullName evidence="1">Beta-IPM dehydrogenase</fullName>
        <shortName evidence="1">IMDH</shortName>
    </alternativeName>
</protein>